<gene>
    <name type="ordered locus">RC1_1808</name>
</gene>
<reference key="1">
    <citation type="submission" date="2007-03" db="EMBL/GenBank/DDBJ databases">
        <title>Genome sequence of Rhodospirillum centenum.</title>
        <authorList>
            <person name="Touchman J.W."/>
            <person name="Bauer C."/>
            <person name="Blankenship R.E."/>
        </authorList>
    </citation>
    <scope>NUCLEOTIDE SEQUENCE [LARGE SCALE GENOMIC DNA]</scope>
    <source>
        <strain>ATCC 51521 / SW</strain>
    </source>
</reference>
<name>Y1808_RHOCS</name>
<dbReference type="EMBL" id="CP000613">
    <property type="protein sequence ID" value="ACI99205.1"/>
    <property type="molecule type" value="Genomic_DNA"/>
</dbReference>
<dbReference type="RefSeq" id="WP_012566990.1">
    <property type="nucleotide sequence ID" value="NC_011420.2"/>
</dbReference>
<dbReference type="SMR" id="B6INM1"/>
<dbReference type="STRING" id="414684.RC1_1808"/>
<dbReference type="KEGG" id="rce:RC1_1808"/>
<dbReference type="eggNOG" id="COG0217">
    <property type="taxonomic scope" value="Bacteria"/>
</dbReference>
<dbReference type="HOGENOM" id="CLU_062974_2_2_5"/>
<dbReference type="OrthoDB" id="9781053at2"/>
<dbReference type="Proteomes" id="UP000001591">
    <property type="component" value="Chromosome"/>
</dbReference>
<dbReference type="GO" id="GO:0005829">
    <property type="term" value="C:cytosol"/>
    <property type="evidence" value="ECO:0007669"/>
    <property type="project" value="TreeGrafter"/>
</dbReference>
<dbReference type="GO" id="GO:0003677">
    <property type="term" value="F:DNA binding"/>
    <property type="evidence" value="ECO:0007669"/>
    <property type="project" value="UniProtKB-UniRule"/>
</dbReference>
<dbReference type="GO" id="GO:0006355">
    <property type="term" value="P:regulation of DNA-templated transcription"/>
    <property type="evidence" value="ECO:0007669"/>
    <property type="project" value="UniProtKB-UniRule"/>
</dbReference>
<dbReference type="FunFam" id="1.10.10.200:FF:000002">
    <property type="entry name" value="Probable transcriptional regulatory protein CLM62_37755"/>
    <property type="match status" value="1"/>
</dbReference>
<dbReference type="Gene3D" id="1.10.10.200">
    <property type="match status" value="1"/>
</dbReference>
<dbReference type="Gene3D" id="3.30.70.980">
    <property type="match status" value="2"/>
</dbReference>
<dbReference type="HAMAP" id="MF_00693">
    <property type="entry name" value="Transcrip_reg_TACO1"/>
    <property type="match status" value="1"/>
</dbReference>
<dbReference type="InterPro" id="IPR017856">
    <property type="entry name" value="Integrase-like_N"/>
</dbReference>
<dbReference type="InterPro" id="IPR048300">
    <property type="entry name" value="TACO1_YebC-like_2nd/3rd_dom"/>
</dbReference>
<dbReference type="InterPro" id="IPR049083">
    <property type="entry name" value="TACO1_YebC_N"/>
</dbReference>
<dbReference type="InterPro" id="IPR002876">
    <property type="entry name" value="Transcrip_reg_TACO1-like"/>
</dbReference>
<dbReference type="InterPro" id="IPR026564">
    <property type="entry name" value="Transcrip_reg_TACO1-like_dom3"/>
</dbReference>
<dbReference type="InterPro" id="IPR029072">
    <property type="entry name" value="YebC-like"/>
</dbReference>
<dbReference type="NCBIfam" id="NF001030">
    <property type="entry name" value="PRK00110.1"/>
    <property type="match status" value="1"/>
</dbReference>
<dbReference type="NCBIfam" id="NF009044">
    <property type="entry name" value="PRK12378.1"/>
    <property type="match status" value="1"/>
</dbReference>
<dbReference type="NCBIfam" id="TIGR01033">
    <property type="entry name" value="YebC/PmpR family DNA-binding transcriptional regulator"/>
    <property type="match status" value="1"/>
</dbReference>
<dbReference type="PANTHER" id="PTHR12532:SF6">
    <property type="entry name" value="TRANSCRIPTIONAL REGULATORY PROTEIN YEBC-RELATED"/>
    <property type="match status" value="1"/>
</dbReference>
<dbReference type="PANTHER" id="PTHR12532">
    <property type="entry name" value="TRANSLATIONAL ACTIVATOR OF CYTOCHROME C OXIDASE 1"/>
    <property type="match status" value="1"/>
</dbReference>
<dbReference type="Pfam" id="PF20772">
    <property type="entry name" value="TACO1_YebC_N"/>
    <property type="match status" value="1"/>
</dbReference>
<dbReference type="Pfam" id="PF01709">
    <property type="entry name" value="Transcrip_reg"/>
    <property type="match status" value="1"/>
</dbReference>
<dbReference type="SUPFAM" id="SSF75625">
    <property type="entry name" value="YebC-like"/>
    <property type="match status" value="1"/>
</dbReference>
<sequence length="250" mass="26875">MAGHSQFKNIMHRKGAQDAKRAKKFNKLAREITVSAKAGLPDPASNPRLRAAIQAARAENMPKDRIERAIKQGTPGADGANYEEVRYEGYGPGGVALIVEALTDNRNRTASEVRTAFTKFGGTLGETNSVSFMFNRIGQVVYPASVADADTVLEAAIEAGADDVQSDEGGHYISTAVDSLGEVRDALETRFGPPESAKLTWQPQNTVPVAAEDAAQSLMKLLDMLDDNDDVQTVLGNFDIPQDLLDKLNG</sequence>
<evidence type="ECO:0000255" key="1">
    <source>
        <dbReference type="HAMAP-Rule" id="MF_00693"/>
    </source>
</evidence>
<evidence type="ECO:0000256" key="2">
    <source>
        <dbReference type="SAM" id="MobiDB-lite"/>
    </source>
</evidence>
<accession>B6INM1</accession>
<proteinExistence type="inferred from homology"/>
<comment type="subcellular location">
    <subcellularLocation>
        <location evidence="1">Cytoplasm</location>
    </subcellularLocation>
</comment>
<comment type="similarity">
    <text evidence="1">Belongs to the TACO1 family.</text>
</comment>
<keyword id="KW-0963">Cytoplasm</keyword>
<keyword id="KW-0238">DNA-binding</keyword>
<keyword id="KW-1185">Reference proteome</keyword>
<keyword id="KW-0804">Transcription</keyword>
<keyword id="KW-0805">Transcription regulation</keyword>
<protein>
    <recommendedName>
        <fullName evidence="1">Probable transcriptional regulatory protein RC1_1808</fullName>
    </recommendedName>
</protein>
<feature type="chain" id="PRO_1000132234" description="Probable transcriptional regulatory protein RC1_1808">
    <location>
        <begin position="1"/>
        <end position="250"/>
    </location>
</feature>
<feature type="region of interest" description="Disordered" evidence="2">
    <location>
        <begin position="1"/>
        <end position="21"/>
    </location>
</feature>
<organism>
    <name type="scientific">Rhodospirillum centenum (strain ATCC 51521 / SW)</name>
    <dbReference type="NCBI Taxonomy" id="414684"/>
    <lineage>
        <taxon>Bacteria</taxon>
        <taxon>Pseudomonadati</taxon>
        <taxon>Pseudomonadota</taxon>
        <taxon>Alphaproteobacteria</taxon>
        <taxon>Rhodospirillales</taxon>
        <taxon>Rhodospirillaceae</taxon>
        <taxon>Rhodospirillum</taxon>
    </lineage>
</organism>